<organism>
    <name type="scientific">Porphyra purpurea</name>
    <name type="common">Red seaweed</name>
    <name type="synonym">Ulva purpurea</name>
    <dbReference type="NCBI Taxonomy" id="2787"/>
    <lineage>
        <taxon>Eukaryota</taxon>
        <taxon>Rhodophyta</taxon>
        <taxon>Bangiophyceae</taxon>
        <taxon>Bangiales</taxon>
        <taxon>Bangiaceae</taxon>
        <taxon>Porphyra</taxon>
    </lineage>
</organism>
<accession>P51289</accession>
<dbReference type="EMBL" id="U38804">
    <property type="protein sequence ID" value="AAC08175.1"/>
    <property type="molecule type" value="Genomic_DNA"/>
</dbReference>
<dbReference type="PIR" id="S73210">
    <property type="entry name" value="S73210"/>
</dbReference>
<dbReference type="RefSeq" id="NP_053899.1">
    <property type="nucleotide sequence ID" value="NC_000925.1"/>
</dbReference>
<dbReference type="SMR" id="P51289"/>
<dbReference type="GeneID" id="809918"/>
<dbReference type="GO" id="GO:0009507">
    <property type="term" value="C:chloroplast"/>
    <property type="evidence" value="ECO:0007669"/>
    <property type="project" value="UniProtKB-SubCell"/>
</dbReference>
<dbReference type="GO" id="GO:0015935">
    <property type="term" value="C:small ribosomal subunit"/>
    <property type="evidence" value="ECO:0007669"/>
    <property type="project" value="InterPro"/>
</dbReference>
<dbReference type="GO" id="GO:0019843">
    <property type="term" value="F:rRNA binding"/>
    <property type="evidence" value="ECO:0007669"/>
    <property type="project" value="UniProtKB-UniRule"/>
</dbReference>
<dbReference type="GO" id="GO:0003735">
    <property type="term" value="F:structural constituent of ribosome"/>
    <property type="evidence" value="ECO:0007669"/>
    <property type="project" value="InterPro"/>
</dbReference>
<dbReference type="GO" id="GO:0006412">
    <property type="term" value="P:translation"/>
    <property type="evidence" value="ECO:0007669"/>
    <property type="project" value="UniProtKB-UniRule"/>
</dbReference>
<dbReference type="CDD" id="cd03368">
    <property type="entry name" value="Ribosomal_S12"/>
    <property type="match status" value="1"/>
</dbReference>
<dbReference type="FunFam" id="2.40.50.140:FF:000001">
    <property type="entry name" value="30S ribosomal protein S12"/>
    <property type="match status" value="1"/>
</dbReference>
<dbReference type="Gene3D" id="2.40.50.140">
    <property type="entry name" value="Nucleic acid-binding proteins"/>
    <property type="match status" value="1"/>
</dbReference>
<dbReference type="HAMAP" id="MF_00403_B">
    <property type="entry name" value="Ribosomal_uS12_B"/>
    <property type="match status" value="1"/>
</dbReference>
<dbReference type="InterPro" id="IPR012340">
    <property type="entry name" value="NA-bd_OB-fold"/>
</dbReference>
<dbReference type="InterPro" id="IPR006032">
    <property type="entry name" value="Ribosomal_uS12"/>
</dbReference>
<dbReference type="InterPro" id="IPR005679">
    <property type="entry name" value="Ribosomal_uS12_bac"/>
</dbReference>
<dbReference type="NCBIfam" id="TIGR00981">
    <property type="entry name" value="rpsL_bact"/>
    <property type="match status" value="1"/>
</dbReference>
<dbReference type="PANTHER" id="PTHR11652">
    <property type="entry name" value="30S RIBOSOMAL PROTEIN S12 FAMILY MEMBER"/>
    <property type="match status" value="1"/>
</dbReference>
<dbReference type="Pfam" id="PF00164">
    <property type="entry name" value="Ribosom_S12_S23"/>
    <property type="match status" value="1"/>
</dbReference>
<dbReference type="PIRSF" id="PIRSF002133">
    <property type="entry name" value="Ribosomal_S12/S23"/>
    <property type="match status" value="1"/>
</dbReference>
<dbReference type="PRINTS" id="PR01034">
    <property type="entry name" value="RIBOSOMALS12"/>
</dbReference>
<dbReference type="SUPFAM" id="SSF50249">
    <property type="entry name" value="Nucleic acid-binding proteins"/>
    <property type="match status" value="1"/>
</dbReference>
<dbReference type="PROSITE" id="PS00055">
    <property type="entry name" value="RIBOSOMAL_S12"/>
    <property type="match status" value="1"/>
</dbReference>
<comment type="function">
    <text evidence="1">With S4 and S5 plays an important role in translational accuracy. Located at the interface of the 30S and 50S subunits (By similarity).</text>
</comment>
<comment type="subunit">
    <text evidence="1">Part of the 30S ribosomal subunit.</text>
</comment>
<comment type="subcellular location">
    <subcellularLocation>
        <location>Plastid</location>
        <location>Chloroplast</location>
    </subcellularLocation>
</comment>
<comment type="similarity">
    <text evidence="3">Belongs to the universal ribosomal protein uS12 family.</text>
</comment>
<keyword id="KW-0150">Chloroplast</keyword>
<keyword id="KW-0934">Plastid</keyword>
<keyword id="KW-0687">Ribonucleoprotein</keyword>
<keyword id="KW-0689">Ribosomal protein</keyword>
<keyword id="KW-0694">RNA-binding</keyword>
<keyword id="KW-0699">rRNA-binding</keyword>
<name>RR12_PORPU</name>
<feature type="chain" id="PRO_0000146421" description="Small ribosomal subunit protein uS12c">
    <location>
        <begin position="1"/>
        <end position="124"/>
    </location>
</feature>
<feature type="region of interest" description="Disordered" evidence="2">
    <location>
        <begin position="1"/>
        <end position="28"/>
    </location>
</feature>
<feature type="region of interest" description="Disordered" evidence="2">
    <location>
        <begin position="104"/>
        <end position="124"/>
    </location>
</feature>
<feature type="compositionally biased region" description="Basic residues" evidence="2">
    <location>
        <begin position="11"/>
        <end position="20"/>
    </location>
</feature>
<feature type="compositionally biased region" description="Basic residues" evidence="2">
    <location>
        <begin position="109"/>
        <end position="124"/>
    </location>
</feature>
<geneLocation type="chloroplast"/>
<reference key="1">
    <citation type="journal article" date="1995" name="Plant Mol. Biol. Rep.">
        <title>Complete nucleotide sequence of the Porphyra purpurea chloroplast genome.</title>
        <authorList>
            <person name="Reith M.E."/>
            <person name="Munholland J."/>
        </authorList>
    </citation>
    <scope>NUCLEOTIDE SEQUENCE [LARGE SCALE GENOMIC DNA]</scope>
    <source>
        <strain>Avonport</strain>
    </source>
</reference>
<sequence length="124" mass="13904">MPTIQQLVRSERRKINKKTKSPALKSCPQRRGVCTRVYTTTPKKPNSALRKVARVRLTSGFEVTAYIPGVGHNIQEHSVVLIRGGRIKDLPGVRYHVVRGTLDAAGVKDRRKSRSKYGTKKPKS</sequence>
<protein>
    <recommendedName>
        <fullName evidence="3">Small ribosomal subunit protein uS12c</fullName>
    </recommendedName>
    <alternativeName>
        <fullName>30S ribosomal protein S12, chloroplastic</fullName>
    </alternativeName>
</protein>
<gene>
    <name type="primary">rps12</name>
</gene>
<evidence type="ECO:0000250" key="1"/>
<evidence type="ECO:0000256" key="2">
    <source>
        <dbReference type="SAM" id="MobiDB-lite"/>
    </source>
</evidence>
<evidence type="ECO:0000305" key="3"/>
<proteinExistence type="inferred from homology"/>